<protein>
    <recommendedName>
        <fullName>F-actin-capping protein subunit alpha-2</fullName>
    </recommendedName>
    <alternativeName>
        <fullName>CapZ alpha-2</fullName>
    </alternativeName>
</protein>
<feature type="initiator methionine" description="Removed" evidence="2">
    <location>
        <position position="1"/>
    </location>
</feature>
<feature type="chain" id="PRO_0000250464" description="F-actin-capping protein subunit alpha-2">
    <location>
        <begin position="2"/>
        <end position="286"/>
    </location>
</feature>
<feature type="modified residue" description="N-acetylalanine" evidence="2">
    <location>
        <position position="2"/>
    </location>
</feature>
<feature type="modified residue" description="Phosphoserine" evidence="2">
    <location>
        <position position="9"/>
    </location>
</feature>
<sequence>MADLEEQLSDEEKVRIAAKFITHAPPGEFNEVFNDVRLLLNNDNLLREGAAHAFAQYNLDQFTPVKIEGYEDQVLITEHGDLGNGKFLDPKNRICFKFDHLRKEATDPRPYEAENAVESWRTSVETALRAYVKEHYPNGVCTVYGKKIDGQQTIIACIESHQFQAKNFWNGRWRSEWKFTITPSTTQVVGILKIQVHYYEDGNVQLVSHKDIQDSLTVSNEVQTAKEFIKIVEAAENEYQTAISENYQTMSDTTFKALRRQLPVTRTKIDWNKILSYKIGKEMQNA</sequence>
<name>CAZA2_LOXAF</name>
<evidence type="ECO:0000250" key="1"/>
<evidence type="ECO:0000250" key="2">
    <source>
        <dbReference type="UniProtKB" id="P47755"/>
    </source>
</evidence>
<evidence type="ECO:0000305" key="3"/>
<gene>
    <name type="primary">CAPZA2</name>
</gene>
<dbReference type="EMBL" id="DP000087">
    <property type="protein sequence ID" value="ABG66647.1"/>
    <property type="molecule type" value="Genomic_DNA"/>
</dbReference>
<dbReference type="SMR" id="Q108U5"/>
<dbReference type="FunCoup" id="Q108U5">
    <property type="interactions" value="751"/>
</dbReference>
<dbReference type="STRING" id="9785.ENSLAFP00000028888"/>
<dbReference type="Ensembl" id="ENSLAFT00000007766.3">
    <property type="protein sequence ID" value="ENSLAFP00000006518.3"/>
    <property type="gene ID" value="ENSLAFG00000007766.3"/>
</dbReference>
<dbReference type="eggNOG" id="KOG0836">
    <property type="taxonomic scope" value="Eukaryota"/>
</dbReference>
<dbReference type="GeneTree" id="ENSGT00950000183119"/>
<dbReference type="HOGENOM" id="CLU_045161_0_0_1"/>
<dbReference type="InParanoid" id="Q108U5"/>
<dbReference type="Proteomes" id="UP000007646">
    <property type="component" value="Unassembled WGS sequence"/>
</dbReference>
<dbReference type="GO" id="GO:0030863">
    <property type="term" value="C:cortical cytoskeleton"/>
    <property type="evidence" value="ECO:0007669"/>
    <property type="project" value="TreeGrafter"/>
</dbReference>
<dbReference type="GO" id="GO:0008290">
    <property type="term" value="C:F-actin capping protein complex"/>
    <property type="evidence" value="ECO:0007669"/>
    <property type="project" value="InterPro"/>
</dbReference>
<dbReference type="GO" id="GO:0051015">
    <property type="term" value="F:actin filament binding"/>
    <property type="evidence" value="ECO:0007669"/>
    <property type="project" value="TreeGrafter"/>
</dbReference>
<dbReference type="GO" id="GO:0030036">
    <property type="term" value="P:actin cytoskeleton organization"/>
    <property type="evidence" value="ECO:0007669"/>
    <property type="project" value="TreeGrafter"/>
</dbReference>
<dbReference type="GO" id="GO:0051016">
    <property type="term" value="P:barbed-end actin filament capping"/>
    <property type="evidence" value="ECO:0007669"/>
    <property type="project" value="InterPro"/>
</dbReference>
<dbReference type="FunFam" id="3.30.1140.60:FF:000001">
    <property type="entry name" value="F-actin-capping protein subunit alpha"/>
    <property type="match status" value="1"/>
</dbReference>
<dbReference type="FunFam" id="3.90.1150.210:FF:000002">
    <property type="entry name" value="F-actin-capping protein subunit alpha"/>
    <property type="match status" value="1"/>
</dbReference>
<dbReference type="Gene3D" id="3.30.1140.60">
    <property type="entry name" value="F-actin capping protein, alpha subunit"/>
    <property type="match status" value="1"/>
</dbReference>
<dbReference type="Gene3D" id="3.90.1150.210">
    <property type="entry name" value="F-actin capping protein, beta subunit"/>
    <property type="match status" value="1"/>
</dbReference>
<dbReference type="InterPro" id="IPR002189">
    <property type="entry name" value="CapZ_alpha"/>
</dbReference>
<dbReference type="InterPro" id="IPR037282">
    <property type="entry name" value="CapZ_alpha/beta"/>
</dbReference>
<dbReference type="InterPro" id="IPR042276">
    <property type="entry name" value="CapZ_alpha/beta_2"/>
</dbReference>
<dbReference type="InterPro" id="IPR042489">
    <property type="entry name" value="CapZ_alpha_1"/>
</dbReference>
<dbReference type="InterPro" id="IPR017865">
    <property type="entry name" value="F-actin_cap_asu_CS"/>
</dbReference>
<dbReference type="PANTHER" id="PTHR10653">
    <property type="entry name" value="F-ACTIN-CAPPING PROTEIN SUBUNIT ALPHA"/>
    <property type="match status" value="1"/>
</dbReference>
<dbReference type="PANTHER" id="PTHR10653:SF2">
    <property type="entry name" value="F-ACTIN-CAPPING PROTEIN SUBUNIT ALPHA-2"/>
    <property type="match status" value="1"/>
</dbReference>
<dbReference type="Pfam" id="PF01267">
    <property type="entry name" value="F-actin_cap_A"/>
    <property type="match status" value="1"/>
</dbReference>
<dbReference type="PRINTS" id="PR00191">
    <property type="entry name" value="FACTINCAPA"/>
</dbReference>
<dbReference type="SUPFAM" id="SSF90096">
    <property type="entry name" value="Subunits of heterodimeric actin filament capping protein Capz"/>
    <property type="match status" value="1"/>
</dbReference>
<dbReference type="PROSITE" id="PS00748">
    <property type="entry name" value="F_ACTIN_CAPPING_A_1"/>
    <property type="match status" value="1"/>
</dbReference>
<dbReference type="PROSITE" id="PS00749">
    <property type="entry name" value="F_ACTIN_CAPPING_A_2"/>
    <property type="match status" value="1"/>
</dbReference>
<reference key="1">
    <citation type="submission" date="2006-07" db="EMBL/GenBank/DDBJ databases">
        <title>NISC comparative sequencing initiative.</title>
        <authorList>
            <person name="Antonellis A."/>
            <person name="Ayele K."/>
            <person name="Benjamin B."/>
            <person name="Blakesley R.W."/>
            <person name="Boakye A."/>
            <person name="Bouffard G.G."/>
            <person name="Brinkley C."/>
            <person name="Brooks S."/>
            <person name="Chu G."/>
            <person name="Coleman H."/>
            <person name="Engle J."/>
            <person name="Gestole M."/>
            <person name="Greene A."/>
            <person name="Guan X."/>
            <person name="Gupta J."/>
            <person name="Haghighi P."/>
            <person name="Han J."/>
            <person name="Hansen N."/>
            <person name="Ho S.-L."/>
            <person name="Hu P."/>
            <person name="Hunter G."/>
            <person name="Hurle B."/>
            <person name="Idol J.R."/>
            <person name="Kwong P."/>
            <person name="Laric P."/>
            <person name="Larson S."/>
            <person name="Lee-Lin S.-Q."/>
            <person name="Legaspi R."/>
            <person name="Madden M."/>
            <person name="Maduro Q.L."/>
            <person name="Maduro V.B."/>
            <person name="Margulies E.H."/>
            <person name="Masiello C."/>
            <person name="Maskeri B."/>
            <person name="McDowell J."/>
            <person name="Mojidi H.A."/>
            <person name="Mullikin J.C."/>
            <person name="Oestreicher J.S."/>
            <person name="Park M."/>
            <person name="Portnoy M.E."/>
            <person name="Prasad A."/>
            <person name="Puri O."/>
            <person name="Reddix-Dugue N."/>
            <person name="Schandler K."/>
            <person name="Schueler M.G."/>
            <person name="Sison C."/>
            <person name="Stantripop S."/>
            <person name="Stephen E."/>
            <person name="Taye A."/>
            <person name="Thomas J.W."/>
            <person name="Thomas P.J."/>
            <person name="Tsipouri V."/>
            <person name="Ung L."/>
            <person name="Vogt J.L."/>
            <person name="Wetherby K.D."/>
            <person name="Young A."/>
            <person name="Green E.D."/>
        </authorList>
    </citation>
    <scope>NUCLEOTIDE SEQUENCE [LARGE SCALE GENOMIC DNA]</scope>
</reference>
<accession>Q108U5</accession>
<keyword id="KW-0007">Acetylation</keyword>
<keyword id="KW-0117">Actin capping</keyword>
<keyword id="KW-0009">Actin-binding</keyword>
<keyword id="KW-0597">Phosphoprotein</keyword>
<keyword id="KW-1185">Reference proteome</keyword>
<comment type="function">
    <text evidence="1">F-actin-capping proteins bind in a Ca(2+)-independent manner to the fast growing ends of actin filaments (barbed end) thereby blocking the exchange of subunits at these ends. Unlike other capping proteins (such as gelsolin and severin), these proteins do not sever actin filaments (By similarity).</text>
</comment>
<comment type="subunit">
    <text evidence="1 2">Component of the F-actin capping complex, composed of a heterodimer of an alpha and a beta subunit. Component of the WASH complex, composed of F-actin-capping protein subunit alpha (CAPZA1, CAPZA2 or CAPZA3), F-actin-capping protein subunit beta (CAPZB), WASHC1, WASHC2, WASHC3, WASHC4 and WASHC5. Interacts with RCSD1/CAPZIP (By similarity). Directly interacts with CRACD; this interaction decreases binding to actin (By similarity).</text>
</comment>
<comment type="similarity">
    <text evidence="3">Belongs to the F-actin-capping protein alpha subunit family.</text>
</comment>
<proteinExistence type="inferred from homology"/>
<organism>
    <name type="scientific">Loxodonta africana</name>
    <name type="common">African elephant</name>
    <dbReference type="NCBI Taxonomy" id="9785"/>
    <lineage>
        <taxon>Eukaryota</taxon>
        <taxon>Metazoa</taxon>
        <taxon>Chordata</taxon>
        <taxon>Craniata</taxon>
        <taxon>Vertebrata</taxon>
        <taxon>Euteleostomi</taxon>
        <taxon>Mammalia</taxon>
        <taxon>Eutheria</taxon>
        <taxon>Afrotheria</taxon>
        <taxon>Proboscidea</taxon>
        <taxon>Elephantidae</taxon>
        <taxon>Loxodonta</taxon>
    </lineage>
</organism>